<sequence length="802" mass="91359">MSFNHQEIEKKWQGYWEENKTFRTPDETEKPKFYALDMFPYPSGAGLHVGHPEGYTATDILSRMKRMQGYNVLHPMGWDAFGLPAEQYALDTGNSPAEFTEHNINTFRNQIKSLGFSYDWDREVNTTDPNYYKWTQWIFLKLFEKGLAYVDEVPVNWCPALGTVLANEEIIDGKSERGGHPVERRPMRQWMLKITAYGDRLLEDLDELDWPESLKDMQRNWIGRSEGAEVHFNIDGTDEKFTVFTTRPDTLFGASYCVLAPEHALVADITTAEQKEAVEAYINSVKMKSDLERTELAKEKTGVFTGAYAVNPVNGEKLPIWIADYVLATYGTGAVMAVPAHDERDYEFASTFNLPMKEVVKGGDITKEAYTGDGEHVNSAFLDGLNKEEAIAKMIEWLEVTSAGNQKVTYRLRDWLFSRQRYWGEPIPVIHWEDGTMTAVKEEELPLVLPKTDNIRPSGTGESPLANIDEWVNVVDPETGKKGRRETNTMPQWAGSCWYYLRYIDPNNSEALVDPEKVKQWLPVDIYIGGAEHAVLHLLYARFWHKVLYDIGVVPTKEPFQQLFNQGMILGENNEKMSKSKGNVVNPDDIVASHGADTLRLYEMFMGPLDASIAWSENGLDGARRFLDRVWRLFVQDNGELSEKITDAPNKELEKAYHQTVKKVTEDYAELRFNTAISQMMVFINDAYKAETLPKEYVEGFVKMIAPVAPHIGEELWSKLGYNETITYASWPTFDESKLVEDEVEIVVQVMGKVRAKLTMSKDASKEEMEQLALEAIKDQIEGKTVRKVIVVPGKLVNVVAN</sequence>
<dbReference type="EC" id="6.1.1.4" evidence="1"/>
<dbReference type="EMBL" id="AE017194">
    <property type="protein sequence ID" value="AAS43783.1"/>
    <property type="molecule type" value="Genomic_DNA"/>
</dbReference>
<dbReference type="SMR" id="Q72YY8"/>
<dbReference type="KEGG" id="bca:BCE_4882"/>
<dbReference type="HOGENOM" id="CLU_004427_0_0_9"/>
<dbReference type="Proteomes" id="UP000002527">
    <property type="component" value="Chromosome"/>
</dbReference>
<dbReference type="GO" id="GO:0005829">
    <property type="term" value="C:cytosol"/>
    <property type="evidence" value="ECO:0007669"/>
    <property type="project" value="TreeGrafter"/>
</dbReference>
<dbReference type="GO" id="GO:0002161">
    <property type="term" value="F:aminoacyl-tRNA deacylase activity"/>
    <property type="evidence" value="ECO:0007669"/>
    <property type="project" value="InterPro"/>
</dbReference>
<dbReference type="GO" id="GO:0005524">
    <property type="term" value="F:ATP binding"/>
    <property type="evidence" value="ECO:0007669"/>
    <property type="project" value="UniProtKB-UniRule"/>
</dbReference>
<dbReference type="GO" id="GO:0004823">
    <property type="term" value="F:leucine-tRNA ligase activity"/>
    <property type="evidence" value="ECO:0007669"/>
    <property type="project" value="UniProtKB-UniRule"/>
</dbReference>
<dbReference type="GO" id="GO:0006429">
    <property type="term" value="P:leucyl-tRNA aminoacylation"/>
    <property type="evidence" value="ECO:0007669"/>
    <property type="project" value="UniProtKB-UniRule"/>
</dbReference>
<dbReference type="CDD" id="cd07958">
    <property type="entry name" value="Anticodon_Ia_Leu_BEm"/>
    <property type="match status" value="1"/>
</dbReference>
<dbReference type="CDD" id="cd00812">
    <property type="entry name" value="LeuRS_core"/>
    <property type="match status" value="1"/>
</dbReference>
<dbReference type="FunFam" id="1.10.730.10:FF:000012">
    <property type="entry name" value="Leucine--tRNA ligase"/>
    <property type="match status" value="1"/>
</dbReference>
<dbReference type="FunFam" id="1.10.730.10:FF:000018">
    <property type="entry name" value="Leucine--tRNA ligase"/>
    <property type="match status" value="1"/>
</dbReference>
<dbReference type="FunFam" id="3.10.20.590:FF:000001">
    <property type="entry name" value="Leucine--tRNA ligase"/>
    <property type="match status" value="1"/>
</dbReference>
<dbReference type="FunFam" id="3.40.50.620:FF:000056">
    <property type="entry name" value="Leucine--tRNA ligase"/>
    <property type="match status" value="1"/>
</dbReference>
<dbReference type="FunFam" id="3.40.50.620:FF:000077">
    <property type="entry name" value="Leucine--tRNA ligase"/>
    <property type="match status" value="1"/>
</dbReference>
<dbReference type="Gene3D" id="3.10.20.590">
    <property type="match status" value="1"/>
</dbReference>
<dbReference type="Gene3D" id="3.40.50.620">
    <property type="entry name" value="HUPs"/>
    <property type="match status" value="2"/>
</dbReference>
<dbReference type="Gene3D" id="1.10.730.10">
    <property type="entry name" value="Isoleucyl-tRNA Synthetase, Domain 1"/>
    <property type="match status" value="1"/>
</dbReference>
<dbReference type="HAMAP" id="MF_00049_B">
    <property type="entry name" value="Leu_tRNA_synth_B"/>
    <property type="match status" value="1"/>
</dbReference>
<dbReference type="InterPro" id="IPR001412">
    <property type="entry name" value="aa-tRNA-synth_I_CS"/>
</dbReference>
<dbReference type="InterPro" id="IPR002300">
    <property type="entry name" value="aa-tRNA-synth_Ia"/>
</dbReference>
<dbReference type="InterPro" id="IPR002302">
    <property type="entry name" value="Leu-tRNA-ligase"/>
</dbReference>
<dbReference type="InterPro" id="IPR025709">
    <property type="entry name" value="Leu_tRNA-synth_edit"/>
</dbReference>
<dbReference type="InterPro" id="IPR013155">
    <property type="entry name" value="M/V/L/I-tRNA-synth_anticd-bd"/>
</dbReference>
<dbReference type="InterPro" id="IPR015413">
    <property type="entry name" value="Methionyl/Leucyl_tRNA_Synth"/>
</dbReference>
<dbReference type="InterPro" id="IPR014729">
    <property type="entry name" value="Rossmann-like_a/b/a_fold"/>
</dbReference>
<dbReference type="InterPro" id="IPR009080">
    <property type="entry name" value="tRNAsynth_Ia_anticodon-bd"/>
</dbReference>
<dbReference type="InterPro" id="IPR009008">
    <property type="entry name" value="Val/Leu/Ile-tRNA-synth_edit"/>
</dbReference>
<dbReference type="NCBIfam" id="TIGR00396">
    <property type="entry name" value="leuS_bact"/>
    <property type="match status" value="1"/>
</dbReference>
<dbReference type="PANTHER" id="PTHR43740:SF2">
    <property type="entry name" value="LEUCINE--TRNA LIGASE, MITOCHONDRIAL"/>
    <property type="match status" value="1"/>
</dbReference>
<dbReference type="PANTHER" id="PTHR43740">
    <property type="entry name" value="LEUCYL-TRNA SYNTHETASE"/>
    <property type="match status" value="1"/>
</dbReference>
<dbReference type="Pfam" id="PF08264">
    <property type="entry name" value="Anticodon_1"/>
    <property type="match status" value="1"/>
</dbReference>
<dbReference type="Pfam" id="PF00133">
    <property type="entry name" value="tRNA-synt_1"/>
    <property type="match status" value="1"/>
</dbReference>
<dbReference type="Pfam" id="PF13603">
    <property type="entry name" value="tRNA-synt_1_2"/>
    <property type="match status" value="1"/>
</dbReference>
<dbReference type="Pfam" id="PF09334">
    <property type="entry name" value="tRNA-synt_1g"/>
    <property type="match status" value="1"/>
</dbReference>
<dbReference type="PRINTS" id="PR00985">
    <property type="entry name" value="TRNASYNTHLEU"/>
</dbReference>
<dbReference type="SUPFAM" id="SSF47323">
    <property type="entry name" value="Anticodon-binding domain of a subclass of class I aminoacyl-tRNA synthetases"/>
    <property type="match status" value="1"/>
</dbReference>
<dbReference type="SUPFAM" id="SSF52374">
    <property type="entry name" value="Nucleotidylyl transferase"/>
    <property type="match status" value="1"/>
</dbReference>
<dbReference type="SUPFAM" id="SSF50677">
    <property type="entry name" value="ValRS/IleRS/LeuRS editing domain"/>
    <property type="match status" value="1"/>
</dbReference>
<dbReference type="PROSITE" id="PS00178">
    <property type="entry name" value="AA_TRNA_LIGASE_I"/>
    <property type="match status" value="1"/>
</dbReference>
<protein>
    <recommendedName>
        <fullName evidence="1">Leucine--tRNA ligase</fullName>
        <ecNumber evidence="1">6.1.1.4</ecNumber>
    </recommendedName>
    <alternativeName>
        <fullName evidence="1">Leucyl-tRNA synthetase</fullName>
        <shortName evidence="1">LeuRS</shortName>
    </alternativeName>
</protein>
<proteinExistence type="inferred from homology"/>
<organism>
    <name type="scientific">Bacillus cereus (strain ATCC 10987 / NRS 248)</name>
    <dbReference type="NCBI Taxonomy" id="222523"/>
    <lineage>
        <taxon>Bacteria</taxon>
        <taxon>Bacillati</taxon>
        <taxon>Bacillota</taxon>
        <taxon>Bacilli</taxon>
        <taxon>Bacillales</taxon>
        <taxon>Bacillaceae</taxon>
        <taxon>Bacillus</taxon>
        <taxon>Bacillus cereus group</taxon>
    </lineage>
</organism>
<keyword id="KW-0030">Aminoacyl-tRNA synthetase</keyword>
<keyword id="KW-0067">ATP-binding</keyword>
<keyword id="KW-0963">Cytoplasm</keyword>
<keyword id="KW-0436">Ligase</keyword>
<keyword id="KW-0547">Nucleotide-binding</keyword>
<keyword id="KW-0648">Protein biosynthesis</keyword>
<name>SYL_BACC1</name>
<feature type="chain" id="PRO_0000151965" description="Leucine--tRNA ligase">
    <location>
        <begin position="1"/>
        <end position="802"/>
    </location>
</feature>
<feature type="short sequence motif" description="'HIGH' region">
    <location>
        <begin position="40"/>
        <end position="51"/>
    </location>
</feature>
<feature type="short sequence motif" description="'KMSKS' region">
    <location>
        <begin position="576"/>
        <end position="580"/>
    </location>
</feature>
<feature type="binding site" evidence="1">
    <location>
        <position position="579"/>
    </location>
    <ligand>
        <name>ATP</name>
        <dbReference type="ChEBI" id="CHEBI:30616"/>
    </ligand>
</feature>
<evidence type="ECO:0000255" key="1">
    <source>
        <dbReference type="HAMAP-Rule" id="MF_00049"/>
    </source>
</evidence>
<reference key="1">
    <citation type="journal article" date="2004" name="Nucleic Acids Res.">
        <title>The genome sequence of Bacillus cereus ATCC 10987 reveals metabolic adaptations and a large plasmid related to Bacillus anthracis pXO1.</title>
        <authorList>
            <person name="Rasko D.A."/>
            <person name="Ravel J."/>
            <person name="Oekstad O.A."/>
            <person name="Helgason E."/>
            <person name="Cer R.Z."/>
            <person name="Jiang L."/>
            <person name="Shores K.A."/>
            <person name="Fouts D.E."/>
            <person name="Tourasse N.J."/>
            <person name="Angiuoli S.V."/>
            <person name="Kolonay J.F."/>
            <person name="Nelson W.C."/>
            <person name="Kolstoe A.-B."/>
            <person name="Fraser C.M."/>
            <person name="Read T.D."/>
        </authorList>
    </citation>
    <scope>NUCLEOTIDE SEQUENCE [LARGE SCALE GENOMIC DNA]</scope>
    <source>
        <strain>ATCC 10987 / NRS 248</strain>
    </source>
</reference>
<gene>
    <name evidence="1" type="primary">leuS</name>
    <name type="ordered locus">BCE_4882</name>
</gene>
<accession>Q72YY8</accession>
<comment type="catalytic activity">
    <reaction evidence="1">
        <text>tRNA(Leu) + L-leucine + ATP = L-leucyl-tRNA(Leu) + AMP + diphosphate</text>
        <dbReference type="Rhea" id="RHEA:11688"/>
        <dbReference type="Rhea" id="RHEA-COMP:9613"/>
        <dbReference type="Rhea" id="RHEA-COMP:9622"/>
        <dbReference type="ChEBI" id="CHEBI:30616"/>
        <dbReference type="ChEBI" id="CHEBI:33019"/>
        <dbReference type="ChEBI" id="CHEBI:57427"/>
        <dbReference type="ChEBI" id="CHEBI:78442"/>
        <dbReference type="ChEBI" id="CHEBI:78494"/>
        <dbReference type="ChEBI" id="CHEBI:456215"/>
        <dbReference type="EC" id="6.1.1.4"/>
    </reaction>
</comment>
<comment type="subcellular location">
    <subcellularLocation>
        <location evidence="1">Cytoplasm</location>
    </subcellularLocation>
</comment>
<comment type="similarity">
    <text evidence="1">Belongs to the class-I aminoacyl-tRNA synthetase family.</text>
</comment>